<keyword id="KW-0067">ATP-binding</keyword>
<keyword id="KW-0342">GTP-binding</keyword>
<keyword id="KW-0547">Nucleotide-binding</keyword>
<keyword id="KW-1185">Reference proteome</keyword>
<dbReference type="EMBL" id="CP000930">
    <property type="protein sequence ID" value="ABZ83271.1"/>
    <property type="molecule type" value="Genomic_DNA"/>
</dbReference>
<dbReference type="RefSeq" id="WP_012281805.1">
    <property type="nucleotide sequence ID" value="NC_010337.2"/>
</dbReference>
<dbReference type="SMR" id="B0TGL0"/>
<dbReference type="STRING" id="498761.HM1_1306"/>
<dbReference type="KEGG" id="hmo:HM1_1306"/>
<dbReference type="eggNOG" id="COG1660">
    <property type="taxonomic scope" value="Bacteria"/>
</dbReference>
<dbReference type="HOGENOM" id="CLU_059558_0_0_9"/>
<dbReference type="OrthoDB" id="9784461at2"/>
<dbReference type="Proteomes" id="UP000008550">
    <property type="component" value="Chromosome"/>
</dbReference>
<dbReference type="GO" id="GO:0005524">
    <property type="term" value="F:ATP binding"/>
    <property type="evidence" value="ECO:0007669"/>
    <property type="project" value="UniProtKB-UniRule"/>
</dbReference>
<dbReference type="GO" id="GO:0005525">
    <property type="term" value="F:GTP binding"/>
    <property type="evidence" value="ECO:0007669"/>
    <property type="project" value="UniProtKB-UniRule"/>
</dbReference>
<dbReference type="Gene3D" id="3.40.50.300">
    <property type="entry name" value="P-loop containing nucleotide triphosphate hydrolases"/>
    <property type="match status" value="1"/>
</dbReference>
<dbReference type="HAMAP" id="MF_00636">
    <property type="entry name" value="RapZ_like"/>
    <property type="match status" value="1"/>
</dbReference>
<dbReference type="InterPro" id="IPR027417">
    <property type="entry name" value="P-loop_NTPase"/>
</dbReference>
<dbReference type="InterPro" id="IPR005337">
    <property type="entry name" value="RapZ-like"/>
</dbReference>
<dbReference type="InterPro" id="IPR053930">
    <property type="entry name" value="RapZ-like_N"/>
</dbReference>
<dbReference type="InterPro" id="IPR053931">
    <property type="entry name" value="RapZ_C"/>
</dbReference>
<dbReference type="NCBIfam" id="NF003828">
    <property type="entry name" value="PRK05416.1"/>
    <property type="match status" value="1"/>
</dbReference>
<dbReference type="PANTHER" id="PTHR30448">
    <property type="entry name" value="RNASE ADAPTER PROTEIN RAPZ"/>
    <property type="match status" value="1"/>
</dbReference>
<dbReference type="PANTHER" id="PTHR30448:SF0">
    <property type="entry name" value="RNASE ADAPTER PROTEIN RAPZ"/>
    <property type="match status" value="1"/>
</dbReference>
<dbReference type="Pfam" id="PF22740">
    <property type="entry name" value="PapZ_C"/>
    <property type="match status" value="1"/>
</dbReference>
<dbReference type="Pfam" id="PF03668">
    <property type="entry name" value="RapZ-like_N"/>
    <property type="match status" value="1"/>
</dbReference>
<dbReference type="PIRSF" id="PIRSF005052">
    <property type="entry name" value="P-loopkin"/>
    <property type="match status" value="1"/>
</dbReference>
<dbReference type="SUPFAM" id="SSF52540">
    <property type="entry name" value="P-loop containing nucleoside triphosphate hydrolases"/>
    <property type="match status" value="1"/>
</dbReference>
<sequence length="301" mass="33697">MEKGFDKSAIQMVIITGLSGAGKSQAIRALEDLGFFCVDNLPPNLLPKFGELIVHSKGKINKIALVIDIRGGEFFDSLSDGLHQLGAQGIRCEILFLEASDEVLIRRYKESRRRHPLSGDARIFDSIQLERQMLADLRGRADKVIDTSDLSARQLKNQVFELFGKDARHSQLRITIVSFGYKYGTPRDADLLMDVRFLPNPFYEPALRNLTGNDEPVQEYVLSSPTTKVFMRKYYSLLRFLLPHYTKEGKSHLVVGIGCTGGKHRSVTLANRLAAALVDEDYAITVKHRDIDKDRGGGESA</sequence>
<gene>
    <name type="ordered locus">Helmi_06460</name>
    <name type="ORF">HM1_1306</name>
</gene>
<comment type="function">
    <text evidence="1">Displays ATPase and GTPase activities.</text>
</comment>
<comment type="similarity">
    <text evidence="1">Belongs to the RapZ-like family.</text>
</comment>
<accession>B0TGL0</accession>
<proteinExistence type="inferred from homology"/>
<feature type="chain" id="PRO_0000383252" description="Nucleotide-binding protein Helmi_06460">
    <location>
        <begin position="1"/>
        <end position="301"/>
    </location>
</feature>
<feature type="binding site" evidence="1">
    <location>
        <begin position="17"/>
        <end position="24"/>
    </location>
    <ligand>
        <name>ATP</name>
        <dbReference type="ChEBI" id="CHEBI:30616"/>
    </ligand>
</feature>
<feature type="binding site" evidence="1">
    <location>
        <begin position="68"/>
        <end position="71"/>
    </location>
    <ligand>
        <name>GTP</name>
        <dbReference type="ChEBI" id="CHEBI:37565"/>
    </ligand>
</feature>
<reference key="1">
    <citation type="journal article" date="2008" name="J. Bacteriol.">
        <title>The genome of Heliobacterium modesticaldum, a phototrophic representative of the Firmicutes containing the simplest photosynthetic apparatus.</title>
        <authorList>
            <person name="Sattley W.M."/>
            <person name="Madigan M.T."/>
            <person name="Swingley W.D."/>
            <person name="Cheung P.C."/>
            <person name="Clocksin K.M."/>
            <person name="Conrad A.L."/>
            <person name="Dejesa L.C."/>
            <person name="Honchak B.M."/>
            <person name="Jung D.O."/>
            <person name="Karbach L.E."/>
            <person name="Kurdoglu A."/>
            <person name="Lahiri S."/>
            <person name="Mastrian S.D."/>
            <person name="Page L.E."/>
            <person name="Taylor H.L."/>
            <person name="Wang Z.T."/>
            <person name="Raymond J."/>
            <person name="Chen M."/>
            <person name="Blankenship R.E."/>
            <person name="Touchman J.W."/>
        </authorList>
    </citation>
    <scope>NUCLEOTIDE SEQUENCE [LARGE SCALE GENOMIC DNA]</scope>
    <source>
        <strain>ATCC 51547 / Ice1</strain>
    </source>
</reference>
<name>Y646_HELMI</name>
<evidence type="ECO:0000255" key="1">
    <source>
        <dbReference type="HAMAP-Rule" id="MF_00636"/>
    </source>
</evidence>
<protein>
    <recommendedName>
        <fullName evidence="1">Nucleotide-binding protein Helmi_06460</fullName>
    </recommendedName>
</protein>
<organism>
    <name type="scientific">Heliobacterium modesticaldum (strain ATCC 51547 / Ice1)</name>
    <dbReference type="NCBI Taxonomy" id="498761"/>
    <lineage>
        <taxon>Bacteria</taxon>
        <taxon>Bacillati</taxon>
        <taxon>Bacillota</taxon>
        <taxon>Clostridia</taxon>
        <taxon>Eubacteriales</taxon>
        <taxon>Heliobacteriaceae</taxon>
        <taxon>Heliomicrobium</taxon>
    </lineage>
</organism>